<sequence>MARIKYTTELDAETSAKAMGSELHISPKKSRELCKAIKGMRTNAARQYLEDVVILKQAVPFGRHNDSLGHRKGPMAAGRYPVKVASEMLKLLKNAESNAEYKGLNPEHMFIAHTAMNRGRVIHGMRPRARGRASPENTETVNLEMIISEVR</sequence>
<evidence type="ECO:0000255" key="1">
    <source>
        <dbReference type="HAMAP-Rule" id="MF_01331"/>
    </source>
</evidence>
<evidence type="ECO:0000305" key="2"/>
<protein>
    <recommendedName>
        <fullName evidence="1">Large ribosomal subunit protein uL22</fullName>
    </recommendedName>
    <alternativeName>
        <fullName evidence="2">50S ribosomal protein L22</fullName>
    </alternativeName>
</protein>
<comment type="function">
    <text evidence="1">This protein binds specifically to 23S rRNA. It makes multiple contacts with different domains of the 23S rRNA in the assembled 50S subunit and ribosome.</text>
</comment>
<comment type="function">
    <text evidence="1">The globular domain of the protein is located near the polypeptide exit tunnel on the outside of the subunit, while an extended beta-hairpin is found that lines the wall of the exit tunnel in the center of the 70S ribosome.</text>
</comment>
<comment type="subunit">
    <text evidence="1">Part of the 50S ribosomal subunit.</text>
</comment>
<comment type="similarity">
    <text evidence="1">Belongs to the universal ribosomal protein uL22 family.</text>
</comment>
<proteinExistence type="inferred from homology"/>
<reference key="1">
    <citation type="journal article" date="2009" name="ISME J.">
        <title>The genome sequence of the psychrophilic archaeon, Methanococcoides burtonii: the role of genome evolution in cold adaptation.</title>
        <authorList>
            <person name="Allen M.A."/>
            <person name="Lauro F.M."/>
            <person name="Williams T.J."/>
            <person name="Burg D."/>
            <person name="Siddiqui K.S."/>
            <person name="De Francisci D."/>
            <person name="Chong K.W."/>
            <person name="Pilak O."/>
            <person name="Chew H.H."/>
            <person name="De Maere M.Z."/>
            <person name="Ting L."/>
            <person name="Katrib M."/>
            <person name="Ng C."/>
            <person name="Sowers K.R."/>
            <person name="Galperin M.Y."/>
            <person name="Anderson I.J."/>
            <person name="Ivanova N."/>
            <person name="Dalin E."/>
            <person name="Martinez M."/>
            <person name="Lapidus A."/>
            <person name="Hauser L."/>
            <person name="Land M."/>
            <person name="Thomas T."/>
            <person name="Cavicchioli R."/>
        </authorList>
    </citation>
    <scope>NUCLEOTIDE SEQUENCE [LARGE SCALE GENOMIC DNA]</scope>
    <source>
        <strain>DSM 6242 / NBRC 107633 / OCM 468 / ACE-M</strain>
    </source>
</reference>
<name>RL22_METBU</name>
<dbReference type="EMBL" id="CP000300">
    <property type="protein sequence ID" value="ABE51030.1"/>
    <property type="molecule type" value="Genomic_DNA"/>
</dbReference>
<dbReference type="RefSeq" id="WP_011498194.1">
    <property type="nucleotide sequence ID" value="NC_007955.1"/>
</dbReference>
<dbReference type="SMR" id="Q12ZU6"/>
<dbReference type="STRING" id="259564.Mbur_0006"/>
<dbReference type="GeneID" id="3996906"/>
<dbReference type="KEGG" id="mbu:Mbur_0006"/>
<dbReference type="HOGENOM" id="CLU_083987_0_2_2"/>
<dbReference type="OrthoDB" id="314984at2157"/>
<dbReference type="Proteomes" id="UP000001979">
    <property type="component" value="Chromosome"/>
</dbReference>
<dbReference type="GO" id="GO:0022625">
    <property type="term" value="C:cytosolic large ribosomal subunit"/>
    <property type="evidence" value="ECO:0007669"/>
    <property type="project" value="TreeGrafter"/>
</dbReference>
<dbReference type="GO" id="GO:0019843">
    <property type="term" value="F:rRNA binding"/>
    <property type="evidence" value="ECO:0007669"/>
    <property type="project" value="UniProtKB-UniRule"/>
</dbReference>
<dbReference type="GO" id="GO:0003735">
    <property type="term" value="F:structural constituent of ribosome"/>
    <property type="evidence" value="ECO:0007669"/>
    <property type="project" value="InterPro"/>
</dbReference>
<dbReference type="GO" id="GO:0002181">
    <property type="term" value="P:cytoplasmic translation"/>
    <property type="evidence" value="ECO:0007669"/>
    <property type="project" value="TreeGrafter"/>
</dbReference>
<dbReference type="CDD" id="cd00336">
    <property type="entry name" value="Ribosomal_L22"/>
    <property type="match status" value="1"/>
</dbReference>
<dbReference type="FunFam" id="3.90.470.10:FF:000015">
    <property type="entry name" value="50S ribosomal protein L22"/>
    <property type="match status" value="1"/>
</dbReference>
<dbReference type="Gene3D" id="3.90.470.10">
    <property type="entry name" value="Ribosomal protein L22/L17"/>
    <property type="match status" value="1"/>
</dbReference>
<dbReference type="HAMAP" id="MF_01331_A">
    <property type="entry name" value="Ribosomal_uL22_A"/>
    <property type="match status" value="1"/>
</dbReference>
<dbReference type="InterPro" id="IPR001063">
    <property type="entry name" value="Ribosomal_uL22"/>
</dbReference>
<dbReference type="InterPro" id="IPR005721">
    <property type="entry name" value="Ribosomal_uL22_euk/arc"/>
</dbReference>
<dbReference type="InterPro" id="IPR036394">
    <property type="entry name" value="Ribosomal_uL22_sf"/>
</dbReference>
<dbReference type="NCBIfam" id="NF003260">
    <property type="entry name" value="PRK04223.1"/>
    <property type="match status" value="1"/>
</dbReference>
<dbReference type="NCBIfam" id="TIGR01038">
    <property type="entry name" value="uL22_arch_euk"/>
    <property type="match status" value="1"/>
</dbReference>
<dbReference type="PANTHER" id="PTHR11593">
    <property type="entry name" value="60S RIBOSOMAL PROTEIN L17"/>
    <property type="match status" value="1"/>
</dbReference>
<dbReference type="PANTHER" id="PTHR11593:SF10">
    <property type="entry name" value="60S RIBOSOMAL PROTEIN L17"/>
    <property type="match status" value="1"/>
</dbReference>
<dbReference type="Pfam" id="PF00237">
    <property type="entry name" value="Ribosomal_L22"/>
    <property type="match status" value="1"/>
</dbReference>
<dbReference type="SUPFAM" id="SSF54843">
    <property type="entry name" value="Ribosomal protein L22"/>
    <property type="match status" value="1"/>
</dbReference>
<feature type="chain" id="PRO_1000052604" description="Large ribosomal subunit protein uL22">
    <location>
        <begin position="1"/>
        <end position="151"/>
    </location>
</feature>
<accession>Q12ZU6</accession>
<keyword id="KW-0687">Ribonucleoprotein</keyword>
<keyword id="KW-0689">Ribosomal protein</keyword>
<keyword id="KW-0694">RNA-binding</keyword>
<keyword id="KW-0699">rRNA-binding</keyword>
<organism>
    <name type="scientific">Methanococcoides burtonii (strain DSM 6242 / NBRC 107633 / OCM 468 / ACE-M)</name>
    <dbReference type="NCBI Taxonomy" id="259564"/>
    <lineage>
        <taxon>Archaea</taxon>
        <taxon>Methanobacteriati</taxon>
        <taxon>Methanobacteriota</taxon>
        <taxon>Stenosarchaea group</taxon>
        <taxon>Methanomicrobia</taxon>
        <taxon>Methanosarcinales</taxon>
        <taxon>Methanosarcinaceae</taxon>
        <taxon>Methanococcoides</taxon>
    </lineage>
</organism>
<gene>
    <name evidence="1" type="primary">rpl22</name>
    <name type="ordered locus">Mbur_0006</name>
</gene>